<name>COAX_XYLF2</name>
<feature type="chain" id="PRO_1000140267" description="Type III pantothenate kinase">
    <location>
        <begin position="1"/>
        <end position="242"/>
    </location>
</feature>
<feature type="active site" description="Proton acceptor" evidence="1">
    <location>
        <position position="100"/>
    </location>
</feature>
<feature type="binding site" evidence="1">
    <location>
        <begin position="7"/>
        <end position="14"/>
    </location>
    <ligand>
        <name>ATP</name>
        <dbReference type="ChEBI" id="CHEBI:30616"/>
    </ligand>
</feature>
<feature type="binding site" evidence="1">
    <location>
        <position position="91"/>
    </location>
    <ligand>
        <name>substrate</name>
    </ligand>
</feature>
<feature type="binding site" evidence="1">
    <location>
        <begin position="98"/>
        <end position="101"/>
    </location>
    <ligand>
        <name>substrate</name>
    </ligand>
</feature>
<feature type="binding site" evidence="1">
    <location>
        <position position="121"/>
    </location>
    <ligand>
        <name>ATP</name>
        <dbReference type="ChEBI" id="CHEBI:30616"/>
    </ligand>
</feature>
<feature type="binding site" evidence="1">
    <location>
        <position position="171"/>
    </location>
    <ligand>
        <name>substrate</name>
    </ligand>
</feature>
<dbReference type="EC" id="2.7.1.33" evidence="1"/>
<dbReference type="EMBL" id="CP001011">
    <property type="protein sequence ID" value="ACB92565.1"/>
    <property type="molecule type" value="Genomic_DNA"/>
</dbReference>
<dbReference type="RefSeq" id="WP_004089400.1">
    <property type="nucleotide sequence ID" value="NC_010577.1"/>
</dbReference>
<dbReference type="SMR" id="B2I5C0"/>
<dbReference type="KEGG" id="xfn:XfasM23_1137"/>
<dbReference type="HOGENOM" id="CLU_066627_0_0_6"/>
<dbReference type="UniPathway" id="UPA00241">
    <property type="reaction ID" value="UER00352"/>
</dbReference>
<dbReference type="Proteomes" id="UP000001698">
    <property type="component" value="Chromosome"/>
</dbReference>
<dbReference type="GO" id="GO:0005737">
    <property type="term" value="C:cytoplasm"/>
    <property type="evidence" value="ECO:0007669"/>
    <property type="project" value="UniProtKB-SubCell"/>
</dbReference>
<dbReference type="GO" id="GO:0005524">
    <property type="term" value="F:ATP binding"/>
    <property type="evidence" value="ECO:0007669"/>
    <property type="project" value="UniProtKB-UniRule"/>
</dbReference>
<dbReference type="GO" id="GO:0004594">
    <property type="term" value="F:pantothenate kinase activity"/>
    <property type="evidence" value="ECO:0007669"/>
    <property type="project" value="UniProtKB-UniRule"/>
</dbReference>
<dbReference type="GO" id="GO:0015937">
    <property type="term" value="P:coenzyme A biosynthetic process"/>
    <property type="evidence" value="ECO:0007669"/>
    <property type="project" value="UniProtKB-UniRule"/>
</dbReference>
<dbReference type="CDD" id="cd24015">
    <property type="entry name" value="ASKHA_NBD_PanK-III"/>
    <property type="match status" value="1"/>
</dbReference>
<dbReference type="Gene3D" id="3.30.420.40">
    <property type="match status" value="2"/>
</dbReference>
<dbReference type="HAMAP" id="MF_01274">
    <property type="entry name" value="Pantothen_kinase_3"/>
    <property type="match status" value="1"/>
</dbReference>
<dbReference type="InterPro" id="IPR043129">
    <property type="entry name" value="ATPase_NBD"/>
</dbReference>
<dbReference type="InterPro" id="IPR004619">
    <property type="entry name" value="Type_III_PanK"/>
</dbReference>
<dbReference type="NCBIfam" id="TIGR00671">
    <property type="entry name" value="baf"/>
    <property type="match status" value="1"/>
</dbReference>
<dbReference type="NCBIfam" id="NF009864">
    <property type="entry name" value="PRK13327.1"/>
    <property type="match status" value="1"/>
</dbReference>
<dbReference type="PANTHER" id="PTHR34265">
    <property type="entry name" value="TYPE III PANTOTHENATE KINASE"/>
    <property type="match status" value="1"/>
</dbReference>
<dbReference type="PANTHER" id="PTHR34265:SF1">
    <property type="entry name" value="TYPE III PANTOTHENATE KINASE"/>
    <property type="match status" value="1"/>
</dbReference>
<dbReference type="Pfam" id="PF03309">
    <property type="entry name" value="Pan_kinase"/>
    <property type="match status" value="1"/>
</dbReference>
<dbReference type="SUPFAM" id="SSF53067">
    <property type="entry name" value="Actin-like ATPase domain"/>
    <property type="match status" value="2"/>
</dbReference>
<reference key="1">
    <citation type="journal article" date="2010" name="J. Bacteriol.">
        <title>Whole genome sequences of two Xylella fastidiosa strains (M12 and M23) causing almond leaf scorch disease in California.</title>
        <authorList>
            <person name="Chen J."/>
            <person name="Xie G."/>
            <person name="Han S."/>
            <person name="Chertkov O."/>
            <person name="Sims D."/>
            <person name="Civerolo E.L."/>
        </authorList>
    </citation>
    <scope>NUCLEOTIDE SEQUENCE [LARGE SCALE GENOMIC DNA]</scope>
    <source>
        <strain>M23</strain>
    </source>
</reference>
<keyword id="KW-0067">ATP-binding</keyword>
<keyword id="KW-0173">Coenzyme A biosynthesis</keyword>
<keyword id="KW-0963">Cytoplasm</keyword>
<keyword id="KW-0418">Kinase</keyword>
<keyword id="KW-0547">Nucleotide-binding</keyword>
<keyword id="KW-0630">Potassium</keyword>
<keyword id="KW-0808">Transferase</keyword>
<accession>B2I5C0</accession>
<gene>
    <name evidence="1" type="primary">coaX</name>
    <name type="ordered locus">XfasM23_1137</name>
</gene>
<evidence type="ECO:0000255" key="1">
    <source>
        <dbReference type="HAMAP-Rule" id="MF_01274"/>
    </source>
</evidence>
<proteinExistence type="inferred from homology"/>
<organism>
    <name type="scientific">Xylella fastidiosa (strain M23)</name>
    <dbReference type="NCBI Taxonomy" id="405441"/>
    <lineage>
        <taxon>Bacteria</taxon>
        <taxon>Pseudomonadati</taxon>
        <taxon>Pseudomonadota</taxon>
        <taxon>Gammaproteobacteria</taxon>
        <taxon>Lysobacterales</taxon>
        <taxon>Lysobacteraceae</taxon>
        <taxon>Xylella</taxon>
    </lineage>
</organism>
<sequence>MNDWLFDLGNSRFKCASLREGVIGPVTVLPYLTETMDAFALQELPRGRVAYLASVAAPAITTHVLEVLKIHFEKVQVAATVAACAGVRIAYAHPERFGVDRFLALLGSYGEGNVLVVGVGTALTIDLLAANGCHLGGRISASPTLMRQALHARAEQLPLSGGNYLEFAEDTEDALVSGCNGAAVALIERSLYEAHQRLDQSVRLLLHGGGVASLLPWLGDVVHRPKLVLDGLAIWAAVAANV</sequence>
<protein>
    <recommendedName>
        <fullName evidence="1">Type III pantothenate kinase</fullName>
        <ecNumber evidence="1">2.7.1.33</ecNumber>
    </recommendedName>
    <alternativeName>
        <fullName evidence="1">PanK-III</fullName>
    </alternativeName>
    <alternativeName>
        <fullName evidence="1">Pantothenic acid kinase</fullName>
    </alternativeName>
</protein>
<comment type="function">
    <text evidence="1">Catalyzes the phosphorylation of pantothenate (Pan), the first step in CoA biosynthesis.</text>
</comment>
<comment type="catalytic activity">
    <reaction evidence="1">
        <text>(R)-pantothenate + ATP = (R)-4'-phosphopantothenate + ADP + H(+)</text>
        <dbReference type="Rhea" id="RHEA:16373"/>
        <dbReference type="ChEBI" id="CHEBI:10986"/>
        <dbReference type="ChEBI" id="CHEBI:15378"/>
        <dbReference type="ChEBI" id="CHEBI:29032"/>
        <dbReference type="ChEBI" id="CHEBI:30616"/>
        <dbReference type="ChEBI" id="CHEBI:456216"/>
        <dbReference type="EC" id="2.7.1.33"/>
    </reaction>
</comment>
<comment type="cofactor">
    <cofactor evidence="1">
        <name>NH4(+)</name>
        <dbReference type="ChEBI" id="CHEBI:28938"/>
    </cofactor>
    <cofactor evidence="1">
        <name>K(+)</name>
        <dbReference type="ChEBI" id="CHEBI:29103"/>
    </cofactor>
    <text evidence="1">A monovalent cation. Ammonium or potassium.</text>
</comment>
<comment type="pathway">
    <text evidence="1">Cofactor biosynthesis; coenzyme A biosynthesis; CoA from (R)-pantothenate: step 1/5.</text>
</comment>
<comment type="subunit">
    <text evidence="1">Homodimer.</text>
</comment>
<comment type="subcellular location">
    <subcellularLocation>
        <location evidence="1">Cytoplasm</location>
    </subcellularLocation>
</comment>
<comment type="similarity">
    <text evidence="1">Belongs to the type III pantothenate kinase family.</text>
</comment>